<accession>O08623</accession>
<accession>Q8CH59</accession>
<feature type="initiator methionine" description="Removed" evidence="2">
    <location>
        <position position="1"/>
    </location>
</feature>
<feature type="chain" id="PRO_0000072179" description="Sequestosome-1">
    <location>
        <begin position="2"/>
        <end position="439"/>
    </location>
</feature>
<feature type="domain" description="PB1" evidence="6">
    <location>
        <begin position="3"/>
        <end position="100"/>
    </location>
</feature>
<feature type="domain" description="UBA" evidence="4">
    <location>
        <begin position="388"/>
        <end position="433"/>
    </location>
</feature>
<feature type="zinc finger region" description="ZZ-type" evidence="5">
    <location>
        <begin position="120"/>
        <end position="170"/>
    </location>
</feature>
<feature type="region of interest" description="Interaction with LCK" evidence="2">
    <location>
        <begin position="2"/>
        <end position="48"/>
    </location>
</feature>
<feature type="region of interest" description="Interaction with PRKCZ and dimerization" evidence="9 14">
    <location>
        <begin position="41"/>
        <end position="105"/>
    </location>
</feature>
<feature type="region of interest" description="Interaction with PAWR" evidence="2">
    <location>
        <begin position="48"/>
        <end position="78"/>
    </location>
</feature>
<feature type="region of interest" description="Interaction with GABRR3" evidence="14">
    <location>
        <begin position="119"/>
        <end position="221"/>
    </location>
</feature>
<feature type="region of interest" description="LIM protein-binding" evidence="2">
    <location>
        <begin position="167"/>
        <end position="217"/>
    </location>
</feature>
<feature type="region of interest" description="Disordered" evidence="7">
    <location>
        <begin position="201"/>
        <end position="231"/>
    </location>
</feature>
<feature type="region of interest" description="Disordered" evidence="7">
    <location>
        <begin position="259"/>
        <end position="389"/>
    </location>
</feature>
<feature type="region of interest" description="Interaction with NTRK1" evidence="11">
    <location>
        <begin position="266"/>
        <end position="439"/>
    </location>
</feature>
<feature type="region of interest" description="MAP1LC3B-binding" evidence="2">
    <location>
        <begin position="320"/>
        <end position="341"/>
    </location>
</feature>
<feature type="region of interest" description="Interaction with KEAP1" evidence="3">
    <location>
        <begin position="346"/>
        <end position="351"/>
    </location>
</feature>
<feature type="short sequence motif" description="TRAF6-binding" evidence="1">
    <location>
        <begin position="225"/>
        <end position="230"/>
    </location>
</feature>
<feature type="short sequence motif" description="LIR">
    <location>
        <begin position="335"/>
        <end position="340"/>
    </location>
</feature>
<feature type="compositionally biased region" description="Polar residues" evidence="7">
    <location>
        <begin position="265"/>
        <end position="292"/>
    </location>
</feature>
<feature type="compositionally biased region" description="Basic and acidic residues" evidence="7">
    <location>
        <begin position="336"/>
        <end position="346"/>
    </location>
</feature>
<feature type="compositionally biased region" description="Polar residues" evidence="7">
    <location>
        <begin position="350"/>
        <end position="372"/>
    </location>
</feature>
<feature type="binding site" evidence="5">
    <location>
        <position position="125"/>
    </location>
    <ligand>
        <name>Zn(2+)</name>
        <dbReference type="ChEBI" id="CHEBI:29105"/>
        <label>1</label>
    </ligand>
</feature>
<feature type="binding site" evidence="5">
    <location>
        <position position="128"/>
    </location>
    <ligand>
        <name>Zn(2+)</name>
        <dbReference type="ChEBI" id="CHEBI:29105"/>
        <label>1</label>
    </ligand>
</feature>
<feature type="binding site" evidence="5">
    <location>
        <position position="139"/>
    </location>
    <ligand>
        <name>Zn(2+)</name>
        <dbReference type="ChEBI" id="CHEBI:29105"/>
        <label>2</label>
    </ligand>
</feature>
<feature type="binding site" evidence="5">
    <location>
        <position position="142"/>
    </location>
    <ligand>
        <name>Zn(2+)</name>
        <dbReference type="ChEBI" id="CHEBI:29105"/>
        <label>2</label>
    </ligand>
</feature>
<feature type="binding site" evidence="5">
    <location>
        <position position="148"/>
    </location>
    <ligand>
        <name>Zn(2+)</name>
        <dbReference type="ChEBI" id="CHEBI:29105"/>
        <label>1</label>
    </ligand>
</feature>
<feature type="binding site" evidence="5">
    <location>
        <position position="151"/>
    </location>
    <ligand>
        <name>Zn(2+)</name>
        <dbReference type="ChEBI" id="CHEBI:29105"/>
        <label>1</label>
    </ligand>
</feature>
<feature type="binding site" evidence="5">
    <location>
        <position position="157"/>
    </location>
    <ligand>
        <name>Zn(2+)</name>
        <dbReference type="ChEBI" id="CHEBI:29105"/>
        <label>2</label>
    </ligand>
</feature>
<feature type="binding site" evidence="5">
    <location>
        <position position="160"/>
    </location>
    <ligand>
        <name>Zn(2+)</name>
        <dbReference type="ChEBI" id="CHEBI:29105"/>
        <label>2</label>
    </ligand>
</feature>
<feature type="modified residue" description="N-acetylalanine" evidence="2">
    <location>
        <position position="2"/>
    </location>
</feature>
<feature type="modified residue" description="Phosphoserine" evidence="2">
    <location>
        <position position="24"/>
    </location>
</feature>
<feature type="modified residue" description="Phosphotyrosine" evidence="2">
    <location>
        <position position="145"/>
    </location>
</feature>
<feature type="modified residue" description="Phosphoserine" evidence="2">
    <location>
        <position position="173"/>
    </location>
</feature>
<feature type="modified residue" description="Phosphoserine" evidence="3">
    <location>
        <position position="175"/>
    </location>
</feature>
<feature type="modified residue" description="Phosphoserine" evidence="2">
    <location>
        <position position="204"/>
    </location>
</feature>
<feature type="modified residue" description="Phosphoserine" evidence="2">
    <location>
        <position position="246"/>
    </location>
</feature>
<feature type="modified residue" description="Phosphoserine" evidence="2">
    <location>
        <position position="263"/>
    </location>
</feature>
<feature type="modified residue" description="Phosphothreonine" evidence="24">
    <location>
        <position position="266"/>
    </location>
</feature>
<feature type="modified residue" description="Phosphoserine" evidence="2">
    <location>
        <position position="269"/>
    </location>
</feature>
<feature type="modified residue" description="Phosphoserine" evidence="2">
    <location>
        <position position="281"/>
    </location>
</feature>
<feature type="modified residue" description="Phosphoserine" evidence="2">
    <location>
        <position position="305"/>
    </location>
</feature>
<feature type="modified residue" description="Phosphoserine" evidence="2">
    <location>
        <position position="327"/>
    </location>
</feature>
<feature type="modified residue" description="Phosphoserine" evidence="2">
    <location>
        <position position="331"/>
    </location>
</feature>
<feature type="modified residue" description="Phosphoserine" evidence="3">
    <location>
        <position position="348"/>
    </location>
</feature>
<feature type="modified residue" description="Phosphoserine" evidence="24">
    <location>
        <position position="354"/>
    </location>
</feature>
<feature type="modified residue" description="Phosphoserine" evidence="2">
    <location>
        <position position="360"/>
    </location>
</feature>
<feature type="modified residue" description="Phosphoserine" evidence="3">
    <location>
        <position position="364"/>
    </location>
</feature>
<feature type="modified residue" description="Phosphoserine" evidence="2">
    <location>
        <position position="365"/>
    </location>
</feature>
<feature type="modified residue" description="Phosphoserine; by ULK1 and TBK1" evidence="2">
    <location>
        <position position="402"/>
    </location>
</feature>
<feature type="modified residue" description="Phosphoserine" evidence="2">
    <location>
        <position position="406"/>
    </location>
</feature>
<feature type="modified residue" description="N6-acetyllysine; alternate" evidence="2">
    <location>
        <position position="419"/>
    </location>
</feature>
<feature type="modified residue" description="N6-acetyllysine; alternate" evidence="2">
    <location>
        <position position="434"/>
    </location>
</feature>
<feature type="lipid moiety-binding region" description="S-palmitoyl cysteine" evidence="2">
    <location>
        <position position="288"/>
    </location>
</feature>
<feature type="cross-link" description="Glycyl lysine isopeptide (Lys-Gly) (interchain with G-Cter in ubiquitin); alternate" evidence="2">
    <location>
        <position position="419"/>
    </location>
</feature>
<feature type="cross-link" description="Glycyl lysine isopeptide (Lys-Gly) (interchain with G-Cter in SUMO2); alternate" evidence="2">
    <location>
        <position position="434"/>
    </location>
</feature>
<feature type="splice variant" id="VSP_015843" description="In isoform 2." evidence="22">
    <location>
        <begin position="222"/>
        <end position="248"/>
    </location>
</feature>
<feature type="splice variant" id="VSP_015844" description="In isoform 3." evidence="21">
    <original>ASAPSEDPNVNFL</original>
    <variation>GKAGVCTGFKCHK</variation>
    <location>
        <begin position="222"/>
        <end position="234"/>
    </location>
</feature>
<feature type="splice variant" id="VSP_015845" description="In isoform 3." evidence="21">
    <location>
        <begin position="235"/>
        <end position="439"/>
    </location>
</feature>
<feature type="mutagenesis site" description="Loss of interaction with PRKCI." evidence="15">
    <original>K</original>
    <variation>A</variation>
    <location>
        <position position="7"/>
    </location>
</feature>
<feature type="mutagenesis site" description="Reduces interaction with PRKCI." evidence="15">
    <original>RR</original>
    <variation>AA</variation>
    <location>
        <begin position="21"/>
        <end position="22"/>
    </location>
</feature>
<feature type="mutagenesis site" description="No effect on interaction with PRKCI. Abolishes homooligomerization; when associated with A-67." evidence="15 19">
    <original>D</original>
    <variation>A</variation>
    <location>
        <position position="67"/>
    </location>
</feature>
<feature type="mutagenesis site" description="Abolishes homooligomerization; when associated with A-67." evidence="19">
    <original>D</original>
    <variation>A</variation>
    <location>
        <position position="69"/>
    </location>
</feature>
<feature type="mutagenesis site" description="Reduces interaction with PRKCI." evidence="15">
    <original>R</original>
    <variation>A</variation>
    <location>
        <position position="94"/>
    </location>
</feature>
<feature type="strand" evidence="25">
    <location>
        <begin position="3"/>
        <end position="11"/>
    </location>
</feature>
<feature type="strand" evidence="25">
    <location>
        <begin position="13"/>
        <end position="15"/>
    </location>
</feature>
<feature type="strand" evidence="25">
    <location>
        <begin position="17"/>
        <end position="29"/>
    </location>
</feature>
<feature type="strand" evidence="25">
    <location>
        <begin position="33"/>
        <end position="35"/>
    </location>
</feature>
<feature type="helix" evidence="25">
    <location>
        <begin position="41"/>
        <end position="52"/>
    </location>
</feature>
<feature type="strand" evidence="25">
    <location>
        <begin position="61"/>
        <end position="66"/>
    </location>
</feature>
<feature type="strand" evidence="25">
    <location>
        <begin position="72"/>
        <end position="75"/>
    </location>
</feature>
<feature type="helix" evidence="25">
    <location>
        <begin position="78"/>
        <end position="87"/>
    </location>
</feature>
<feature type="strand" evidence="25">
    <location>
        <begin position="90"/>
        <end position="99"/>
    </location>
</feature>
<sequence>MASLTVKAYLLGKEEAAREIRRFSFCFSPEPEAEAAAGPGPCERLLSRVAVLFPALRPGGFQAHYRDEDGDLVAFSSDEELTMAMSYVKDDIFRIYIKEKKECRREHRPPCAQEARSMVHPNVICDGCNGPVVGTRYKCSVCPDYDLCSVCEGKGLHREHSKLIFPNPFGHLSDSFSHSRWLRKLKHGHFGWPGWEMGPPGNWSPRPPRAGDGRPCPTAESASAPSEDPNVNFLKNVGESVAAALSPLGIEVDIDVEHGGKRSRLTPTSAESSSTGTEDKSGTQPSSCSSEVSKPDGAGEGPAQSLTEQMKKIALESVGQPEELMESDNCSGGDDDWTHLSSKEVDPSTGELQSLQMPESEGPSSLDPSQEGPTGLKEAALYPHLPPEADPRLIESLSQMLSMGFSDEGGWLTRLLQTKNYDIGAALDTIQYSKHPPPL</sequence>
<comment type="function">
    <text evidence="2 3 11 12">Molecular adapter required for selective macroautophagy (aggrephagy) by acting as a bridge between polyubiquitinated proteins and autophagosomes (By similarity). Promotes the recruitment of ubiquitinated cargo proteins to autophagosomes via multiple domains that bridge proteins and organelles in different steps (By similarity). SQSTM1 first mediates the assembly and removal of ubiquitinated proteins by undergoing liquid-liquid phase separation upon binding to ubiquitinated proteins via its UBA domain, leading to the formation of insoluble cytoplasmic inclusions, known as p62 bodies (By similarity). SQSTM1 then interacts with ATG8 family proteins on autophagosomes via its LIR motif, leading to p62 body recruitment to autophagosomes, followed by autophagic clearance of ubiquitinated proteins (By similarity). SQSTM1 is itself degraded along with its ubiquitinated cargos (By similarity). Also required to recruit ubiquitinated proteins to PML bodies in the nucleus (By similarity). Also involved in autophagy of peroxisomes (pexophagy) in response to reactive oxygen species (ROS) by acting as a bridge between ubiquitinated PEX5 receptor and autophagosomes (By similarity). Acts as an activator of the NFE2L2/NRF2 pathway via interaction with KEAP1: interaction inactivates the BCR(KEAP1) complex by sequestering the complex in inclusion bodies, promoting nuclear accumulation of NFE2L2/NRF2 and subsequent expression of cytoprotective genes (By similarity). Promotes relocalization of 'Lys-63'-linked ubiquitinated STING1 to autophagosomes (By similarity). Involved in endosome organization by retaining vesicles in the perinuclear cloud: following ubiquitination by RNF26, attracts specific vesicle-associated adapters, forming a molecular bridge that restrains cognate vesicles in the perinuclear region and organizes the endosomal pathway for efficient cargo transport (By similarity). Sequesters tensin TNS2 into cytoplasmic puncta, promoting TNS2 ubiquitination and proteasomal degradation (By similarity). May regulate the activation of NFKB1 by TNF-alpha, nerve growth factor (NGF) and interleukin-1 (PubMed:11244088, PubMed:11500922). May play a role in titin/TTN downstream signaling in muscle cells (By similarity). Adapter that mediates the interaction between TRAF6 and CYLD (By similarity).</text>
</comment>
<comment type="function">
    <molecule>Isoform 1</molecule>
    <text evidence="9">More potent than isoform 2 to stimulate PRKCZ-dependent phosphorylation of KCNAB2.</text>
</comment>
<comment type="subunit">
    <text evidence="2 3 9 11 12 14 15 17 18 19 20">Homooligomer or heterooligomer; may form homotypic arrays (PubMed:10477520, PubMed:19728111, PubMed:9177193). Dimerization interferes with ubiquitin binding. Component of a ternary complex with PAWR and PRKCZ (By similarity). Forms a complex with JUB/Ajuba, PRKCZ and TRAF6 (By similarity). Identified in a complex with TRAF6 and CYLD (By similarity). Identified in a heterotrimeric complex with ubiquitin and ZFAND5, where ZFAND5 and SQSTM1 both interact with the same ubiquitin molecule (By similarity). Interacts (via LIR motif) with MAP1LC3A and MAP1LC3B, as well as with other ATG8 family members, including GABARAP, GABARAPL1 and GABARAPL2; these interactions are necessary for the recruitment MAP1 LC3 family members to inclusion bodies containing polyubiquitinated protein aggregates and for their degradation by autophagy (By similarity). Interacts directly with PRKCI and PRKCZ (PubMed:11244088, PubMed:11500922, PubMed:15143057, PubMed:16079148). Interacts with EBI3, LCK, RASA1, NR2F2, NTRK1, NTRK2, NTRK3, NBR1, MAP2K5 and MAPKAPK5 (PubMed:11244088). Upon TNF-alpha stimulation, interacts with RIPK1 probably bridging IKBKB to the TNF-R1 complex composed of TNF-R1/TNFRSF1A, TRADD and RIPK1 (PubMed:16079148). Interacts with the proteasome subunits PSMD4 and PSMC2 (By similarity). Interacts with TRAF6 (PubMed:11244088, PubMed:16079148). Interacts with 'Lys-63'-linked polyubiquitinated MAPT/TAU. Interacts with FHOD3. Interacts with CYLD. Interacts with SESN1. Interacts with SESN2 (By similarity). Interacts with ULK1 (By similarity). Interacts with UBD (By similarity). Interacts with WDR81; the interaction is direct and regulates the interaction of SQSTM1 with ubiquitinated proteins (By similarity). Interacts with WDFY3; this interaction is required to recruit WDFY3 to cytoplasmic bodies and to PML bodies (By similarity). Interacts with LRRC25 (By similarity). Interacts with STING1; leading to relocalization of STING1 to autophagosomes (By similarity). Interacts (when phosphorylated at Ser-348) with KEAP1; the interaction is direct and inactivates the BCR(KEAP1) complex by sequestering KEAP1 in inclusion bodies, promoting its degradation (By similarity). Interacts with MOAP1; promoting dissociation of SQSTM1 inclusion bodies that sequester KEAP1 (By similarity). Interacts with GBP1 (By similarity). Interacts with TAX1BP1 (By similarity). Interacts with (ubiquitinated) PEX5; specifically binds PEX5 ubiquitinated at 'Lys-209' in response to reactive oxygen species (ROS) (By similarity). Interacts (via PB1 domain) with TNS2; the interaction leads to sequestration of TNS2 in cytoplasmic aggregates with SQSTM1 and promotes TNS2 ubiquitination and proteasomal degradation (By similarity). Interacts with IRS1; the interaction is disrupted by the presence of tensin TNS2 (By similarity). Interacts with TRIM5 (By similarity). Interacts with TRIM11 (when ubiquitinated); promoting AIM2 recruitment to autophagosomes and autophagy-dependent degradation of AIM2 (By similarity). Interacts with TRIM13 (By similarity). Interacts with TRIM16 (By similarity). Interacts with TRIM23 (By similarity). Interacts with TRIM50 (By similarity). Interacts with TRIM55 (PubMed:15802564). Interacts with ECSIT; this interaction inhibits TLR4 signaling via functional regulation of the TRAF6-ECSIT complex (By similarity). Interacts with GABRR1, GABRR2 and GABRR3 (PubMed:12431995). Interacts with WDR83 (By similarity). Interacts with GRB2 (By similarity). Interacts with USP12; the interaction is independent of USP12 deubiquitinase activity and may be involved in regulation of autophagic flux (By similarity). Interacts with ASB6 (By similarity).</text>
</comment>
<comment type="subcellular location">
    <subcellularLocation>
        <location evidence="2">Cytoplasmic vesicle</location>
        <location evidence="2">Autophagosome</location>
    </subcellularLocation>
    <subcellularLocation>
        <location evidence="2">Preautophagosomal structure</location>
    </subcellularLocation>
    <subcellularLocation>
        <location evidence="3">Cytoplasm</location>
        <location evidence="3">Cytosol</location>
    </subcellularLocation>
    <subcellularLocation>
        <location evidence="2">Nucleus</location>
        <location evidence="2">PML body</location>
    </subcellularLocation>
    <subcellularLocation>
        <location evidence="2">Late endosome</location>
    </subcellularLocation>
    <subcellularLocation>
        <location evidence="2">Lysosome</location>
    </subcellularLocation>
    <subcellularLocation>
        <location evidence="3">Nucleus</location>
    </subcellularLocation>
    <subcellularLocation>
        <location evidence="2">Endoplasmic reticulum</location>
    </subcellularLocation>
    <subcellularLocation>
        <location evidence="17">Cytoplasm</location>
        <location evidence="17">Myofibril</location>
        <location evidence="17">Sarcomere</location>
    </subcellularLocation>
    <text evidence="2 3 17">In cardiac muscle, localizes to the sarcomeric band (PubMed:15802564). Localizes to cytoplasmic membraneless inclusion bodies, known as p62 bodies, containing polyubiquitinated protein aggregates (By similarity). In protein aggregate diseases of the liver, found in large amounts in Mallory bodies of alcoholic and nonalcoholic steatohepatitis, hyaline bodies in hepatocellular carcinoma, and in SERPINA1 aggregates. Enriched in Rosenthal fibers of pilocytic astrocytoma. In the cytoplasm, observed in both membrane-free ubiquitin-containing protein aggregates (sequestosomes) and membrane-surrounded autophagosomes. Colocalizes with TRIM13 in the perinuclear endoplasmic reticulum. Co-localizes with TRIM5 in cytoplasmic bodies. When nuclear export is blocked by treatment with leptomycin B, accumulates in PML bodies (By similarity).</text>
</comment>
<comment type="alternative products">
    <event type="alternative splicing"/>
    <isoform>
        <id>O08623-1</id>
        <name>1</name>
        <name>Zip1</name>
        <name>B20</name>
        <sequence type="displayed"/>
    </isoform>
    <isoform>
        <id>O08623-2</id>
        <name>2</name>
        <name>Zip2</name>
        <name>B24</name>
        <sequence type="described" ref="VSP_015843"/>
    </isoform>
    <isoform>
        <id>O08623-3</id>
        <name>3</name>
        <name>Zip3</name>
        <sequence type="described" ref="VSP_015844 VSP_015845"/>
    </isoform>
</comment>
<comment type="tissue specificity">
    <text evidence="8 9 14 20">Ubiquitously expressed. In brain, mainly expressed by neurons, especially pyramidal neurons in the cerebral cortex and hippocampus. Also expressed by Purkinje cells and neurons in the dentate nucleus of the cerebellum and neurons of the basal ganglia (at protein level).</text>
</comment>
<comment type="developmental stage">
    <text evidence="9">Maximal expression is detected at postnatal day 13 (P13) (at protein level).</text>
</comment>
<comment type="induction">
    <text evidence="8 9 10 13 16">By the proteasome inhibitors MG132 and lactacystin. By intoxication with 3,5-diethoxycarbonyl-1,4-dihydrocollidine (DCC). By okadaic acid and kainate (at protein level). Isoform 1 and isoform 2 relative amounts are changed upon up-regulation of the expression by NGF.</text>
</comment>
<comment type="domain">
    <text evidence="2 3">The UBA domain binds specifically 'Lys-63'-linked polyubiquitin chains of polyubiquitinated substrates (By similarity). Mediates the interaction with TRIM55. Both the UBA and PB1 domains are necessary and sufficient for the localization into the ubiquitin-containing inclusion bodies (By similarity).</text>
</comment>
<comment type="domain">
    <text evidence="2">The PB1 domain mediates homooligomerization and interactions with FHOD3, MAP2K5, NBR1, PRKCI, PRKCZ and WDR81. Both the PB1 and UBA domains are necessary and sufficient for the localization into the ubiquitin-containing inclusion bodies.</text>
</comment>
<comment type="domain">
    <text evidence="2">The ZZ-type zinc finger mediates the interaction with RIPK1.</text>
</comment>
<comment type="domain">
    <text evidence="3">The LIR (LC3-interacting region) motif mediates the interaction with ATG8 family proteins.</text>
</comment>
<comment type="PTM">
    <text evidence="2 3 20">Phosphorylated (PubMed:9177193). Phosphorylation at Ser-406 by ULK1 destabilizes the UBA dimer interface and increases binding affinity to ubiquitinated proteins. Phosphorylation at Ser-406 also primes for subsequent phosphorylation at Ser-402 (By similarity). Phosphorylation at Ser-402 by CK2 or ULK1 promotes binding to ubiquitinated proteins by increasing the affinity between the UBA domain and polyubiquitin chains. Phosphorylation at Ser-402 by ULK1 is stimulated by SESN2. Phosphorylated at Ser-402 by TBK1, leading to promote relocalization of 'Lys-63'-linked ubiquitinated STING1 to autophagosomes. Phosphorylation at Ser-348 by ULK1 promotes interaction with KEAP1 and inactivation of the BCR(KEAP1) complex, promoting NFE2L2/NRF2 nuclear accumulation and expression of phase II detoxifying enzymes. Phosphorylated in vitro by TTN (By similarity).</text>
</comment>
<comment type="PTM">
    <text evidence="2">Ubiquitinated by UBE2J1 and RNF26 at Lys-434: ubiquitinated SQSTM1 attracts specific vesicle-associated adapters, forming a molecular bridge that restrains cognate vesicles in the perinuclear region and organizes the endosomal pathway for efficient cargo transport. Ubiquitination by UBE2D2 and UBE2D3 increases its ability to bind polyubiquitin chains by destabilizing the UBA dimer interface. Deubiquitination by USP15 releases target vesicles for fast transport into the cell periphery. Ubiquitinated by the BCR(KEAP1) complex at Lys-419, increasing SQSTM1 sequestering activity and promoting its degradation. Ubiquitinated via 'Lys-29' and 'Lys-33'-linked polyubiquitination leading to xenophagic targeting of bacteria and inhibition of their replication.</text>
</comment>
<comment type="PTM">
    <text evidence="2">Acetylated at Lys-419 and Lys-434 by KAT5/TIP60, promotes activity by destabilizing the UBA dimer interface and increases binding affinity to ubiquitinated proteins. Deacetylated by HDAC6.</text>
</comment>
<comment type="PTM">
    <text evidence="2">Palmitoylation at Cys-288 by ZDHHC19 is required for efficient autophagic degradation of SQSTM1-cargo complexes by promoting affinity for ATG8 proteins and recruitment of p62 bodies to autophagosomes. Dealmitoylated at Cys-288 by LYPLA1.</text>
</comment>
<comment type="miscellaneous">
    <molecule>Isoform 1</molecule>
    <text>Major isoform except in central nervous system.</text>
</comment>
<organism evidence="23">
    <name type="scientific">Rattus norvegicus</name>
    <name type="common">Rat</name>
    <dbReference type="NCBI Taxonomy" id="10116"/>
    <lineage>
        <taxon>Eukaryota</taxon>
        <taxon>Metazoa</taxon>
        <taxon>Chordata</taxon>
        <taxon>Craniata</taxon>
        <taxon>Vertebrata</taxon>
        <taxon>Euteleostomi</taxon>
        <taxon>Mammalia</taxon>
        <taxon>Eutheria</taxon>
        <taxon>Euarchontoglires</taxon>
        <taxon>Glires</taxon>
        <taxon>Rodentia</taxon>
        <taxon>Myomorpha</taxon>
        <taxon>Muroidea</taxon>
        <taxon>Muridae</taxon>
        <taxon>Murinae</taxon>
        <taxon>Rattus</taxon>
    </lineage>
</organism>
<reference key="1">
    <citation type="journal article" date="1997" name="Proc. Natl. Acad. Sci. U.S.A.">
        <title>Interaction of protein kinase C zeta with ZIP, a novel protein kinase C-binding protein.</title>
        <authorList>
            <person name="Puls A."/>
            <person name="Schmidt S."/>
            <person name="Grawe F."/>
            <person name="Stabel S."/>
        </authorList>
    </citation>
    <scope>NUCLEOTIDE SEQUENCE [MRNA] (ISOFORM 1)</scope>
    <scope>TISSUE SPECIFICITY</scope>
    <scope>OLIGOMERIZATION</scope>
    <scope>PHOSPHORYLATION</scope>
    <scope>SUBCELLULAR LOCATION</scope>
    <scope>INTERACTION WITH PRKCZ</scope>
    <source>
        <tissue>Brain</tissue>
    </source>
</reference>
<reference key="2">
    <citation type="journal article" date="2003" name="J. Biol. Chem.">
        <title>ZIP3, a new splice variant of the PKC-zeta-interacting protein family, binds to GABAC receptors, PKC-zeta, and Kv beta 2.</title>
        <authorList>
            <person name="Croci C."/>
            <person name="Brandstaetter J.H."/>
            <person name="Enz R."/>
        </authorList>
    </citation>
    <scope>NUCLEOTIDE SEQUENCE [MRNA] (ISOFORM 3)</scope>
    <scope>TISSUE SPECIFICITY</scope>
    <scope>OLIGOMERIZATION</scope>
    <scope>INTERACTION WITH GABRR1; GABRR2; GABRR3; PRKCZ AND KCNAB2</scope>
    <source>
        <strain>Sprague-Dawley</strain>
        <tissue>Brain</tissue>
    </source>
</reference>
<reference key="3">
    <citation type="journal article" date="2004" name="Genome Res.">
        <title>The status, quality, and expansion of the NIH full-length cDNA project: the Mammalian Gene Collection (MGC).</title>
        <authorList>
            <consortium name="The MGC Project Team"/>
        </authorList>
    </citation>
    <scope>NUCLEOTIDE SEQUENCE [LARGE SCALE MRNA] (ISOFORM 1)</scope>
    <source>
        <tissue>Pituitary</tissue>
    </source>
</reference>
<reference key="4">
    <citation type="journal article" date="1999" name="Brain Res. Mol. Brain Res.">
        <title>Effects of kainate-mediated excitotoxicity on the expression of rat counterparts of A170 and MSP23 stress proteins in the brain.</title>
        <authorList>
            <person name="Nakaso K."/>
            <person name="Kitayama M."/>
            <person name="Ishii T."/>
            <person name="Bannai S."/>
            <person name="Yanagawa T."/>
            <person name="Kimura K."/>
            <person name="Nakashima K."/>
            <person name="Ohama E."/>
            <person name="Yamada K."/>
        </authorList>
    </citation>
    <scope>INDUCTION</scope>
    <scope>TISSUE SPECIFICITY</scope>
</reference>
<reference key="5">
    <citation type="journal article" date="1999" name="Science">
        <title>Differential stimulation of PKC phosphorylation of potassium channels by ZIP1 and ZIP2.</title>
        <authorList>
            <person name="Gong J."/>
            <person name="Xu J."/>
            <person name="Bezanilla M."/>
            <person name="van Huizen R."/>
            <person name="Derin R."/>
            <person name="Li M."/>
        </authorList>
    </citation>
    <scope>ALTERNATIVE SPLICING (ISOFORM 2)</scope>
    <scope>TISSUE SPECIFICITY</scope>
    <scope>INTERACTION WITH KCNAB1; KCNAB2 AND PRKCZ</scope>
    <scope>OLIGOMERIZATION</scope>
    <scope>DEVELOPMENTAL STAGE</scope>
    <scope>INDUCTION</scope>
    <scope>FUNCTION</scope>
</reference>
<reference key="6">
    <citation type="journal article" date="2001" name="Biochem. Biophys. Res. Commun.">
        <title>Ubiquitin-binding protein p62 expression is induced during apoptosis and proteasomal inhibition in neuronal cells.</title>
        <authorList>
            <person name="Kuusisto E."/>
            <person name="Suuronen T."/>
            <person name="Salminen A."/>
        </authorList>
    </citation>
    <scope>INDUCTION</scope>
</reference>
<reference key="7">
    <citation type="journal article" date="2001" name="J. Biol. Chem.">
        <title>The atypical protein kinase C-interacting protein p62 is a scaffold for NF-kappaB activation by nerve growth factor.</title>
        <authorList>
            <person name="Wooten M.W."/>
            <person name="Seibenhener M.L."/>
            <person name="Mamidipudi V."/>
            <person name="Diaz-Meco M.T."/>
            <person name="Barker P.A."/>
            <person name="Moscat J."/>
        </authorList>
    </citation>
    <scope>INTERACTION WITH NTRK1; TRAF6 AND PRKCZ</scope>
    <scope>FUNCTION</scope>
</reference>
<reference key="8">
    <citation type="journal article" date="2001" name="J. Cell. Biochem.">
        <title>Nerve growth factor stimulates the interaction of ZIP/p62 with atypical protein kinase C and targets endosomal localization: evidence for regulation of nerve growth factor-induced differentiation.</title>
        <authorList>
            <person name="Samuels I.S."/>
            <person name="Seibenhener M.L."/>
            <person name="Neidigh K.B.W."/>
            <person name="Wooten M.W."/>
        </authorList>
    </citation>
    <scope>INTERACTION WITH PRKCZ</scope>
    <scope>SUBCELLULAR LOCATION</scope>
    <scope>FUNCTION</scope>
</reference>
<reference key="9">
    <citation type="journal article" date="2002" name="Hepatology">
        <title>Mallory body -- a disease-associated type of sequestosome.</title>
        <authorList>
            <person name="Stumptner C."/>
            <person name="Fuchsbichler A."/>
            <person name="Heid H."/>
            <person name="Zatloukal K."/>
            <person name="Denk H."/>
        </authorList>
    </citation>
    <scope>INDUCTION</scope>
</reference>
<reference key="10">
    <citation type="journal article" date="2004" name="Brain Res.">
        <title>Transcriptional activation of p62/A170/ZIP during the formation of the aggregates: possible mechanisms and the role in Lewy body formation in Parkinson's disease.</title>
        <authorList>
            <person name="Nakaso K."/>
            <person name="Yoshimoto Y."/>
            <person name="Nakano T."/>
            <person name="Takeshima T."/>
            <person name="Fukuhara Y."/>
            <person name="Yasui K."/>
            <person name="Araga S."/>
            <person name="Yanagawa T."/>
            <person name="Ishii T."/>
            <person name="Nakashima K."/>
        </authorList>
    </citation>
    <scope>INDUCTION</scope>
</reference>
<reference key="11">
    <citation type="journal article" date="2004" name="J. Biol. Chem.">
        <title>Solution structure of atypical protein kinase C PB1 domain and its mode of interaction with ZIP/p62 and MEK5.</title>
        <authorList>
            <person name="Hirano Y."/>
            <person name="Yoshinaga S."/>
            <person name="Ogura K."/>
            <person name="Yokochi M."/>
            <person name="Noda Y."/>
            <person name="Sumimoto H."/>
            <person name="Inagaki F."/>
        </authorList>
    </citation>
    <scope>INTERACTION WITH PRKCI</scope>
    <scope>MUTAGENESIS OF LYS-7; 21-ARG-ARG-22; ASP-67 AND ARG-94</scope>
</reference>
<reference key="12">
    <citation type="journal article" date="2005" name="J. Biol. Chem.">
        <title>The p62 scaffold regulates nerve growth factor-induced NF-kappaB activation by influencing TRAF6 polyubiquitination.</title>
        <authorList>
            <person name="Wooten M.W."/>
            <person name="Geetha T."/>
            <person name="Seibenhener M.L."/>
            <person name="Babu J.R."/>
            <person name="Diaz-Meco M.T."/>
            <person name="Moscat J."/>
        </authorList>
    </citation>
    <scope>INTERACTION WITH IKBKB; PRKCI AND TRAF6</scope>
</reference>
<reference key="13">
    <citation type="journal article" date="2005" name="Science">
        <title>The kinase domain of titin controls muscle gene expression and protein turnover.</title>
        <authorList>
            <person name="Lange S."/>
            <person name="Xiang F."/>
            <person name="Yakovenko A."/>
            <person name="Vihola A."/>
            <person name="Hackman P."/>
            <person name="Rostkova E."/>
            <person name="Kristensen J."/>
            <person name="Brandmeier B."/>
            <person name="Franzen G."/>
            <person name="Hedberg B."/>
            <person name="Gunnarsson L.G."/>
            <person name="Hughes S.M."/>
            <person name="Marchand S."/>
            <person name="Sejersen T."/>
            <person name="Richard I."/>
            <person name="Edstroem L."/>
            <person name="Ehler E."/>
            <person name="Udd B."/>
            <person name="Gautel M."/>
        </authorList>
    </citation>
    <scope>INTERACTION WITH NBR1 AND TRIM55</scope>
    <scope>SUBCELLULAR LOCATION</scope>
</reference>
<reference key="14">
    <citation type="journal article" date="2012" name="Nat. Commun.">
        <title>Quantitative maps of protein phosphorylation sites across 14 different rat organs and tissues.</title>
        <authorList>
            <person name="Lundby A."/>
            <person name="Secher A."/>
            <person name="Lage K."/>
            <person name="Nordsborg N.B."/>
            <person name="Dmytriyev A."/>
            <person name="Lundby C."/>
            <person name="Olsen J.V."/>
        </authorList>
    </citation>
    <scope>PHOSPHORYLATION [LARGE SCALE ANALYSIS] AT THR-266 AND SER-354</scope>
    <scope>IDENTIFICATION BY MASS SPECTROMETRY [LARGE SCALE ANALYSIS]</scope>
</reference>
<reference key="15">
    <citation type="journal article" date="2009" name="J. Biomol. NMR">
        <title>The NMR structure of the p62 PB1 domain, a key protein in autophagy and NF-kappaB signaling pathway.</title>
        <authorList>
            <person name="Saio T."/>
            <person name="Yokochi M."/>
            <person name="Inagaki F."/>
        </authorList>
    </citation>
    <scope>STRUCTURE BY NMR OF 3-100</scope>
    <scope>SUBUNIT</scope>
    <scope>MUTAGENESIS OF ASP-67 AND ASP-69</scope>
</reference>
<keyword id="KW-0002">3D-structure</keyword>
<keyword id="KW-0007">Acetylation</keyword>
<keyword id="KW-0025">Alternative splicing</keyword>
<keyword id="KW-0053">Apoptosis</keyword>
<keyword id="KW-0072">Autophagy</keyword>
<keyword id="KW-0963">Cytoplasm</keyword>
<keyword id="KW-0968">Cytoplasmic vesicle</keyword>
<keyword id="KW-0221">Differentiation</keyword>
<keyword id="KW-0256">Endoplasmic reticulum</keyword>
<keyword id="KW-0967">Endosome</keyword>
<keyword id="KW-0391">Immunity</keyword>
<keyword id="KW-1017">Isopeptide bond</keyword>
<keyword id="KW-0449">Lipoprotein</keyword>
<keyword id="KW-0458">Lysosome</keyword>
<keyword id="KW-0479">Metal-binding</keyword>
<keyword id="KW-0539">Nucleus</keyword>
<keyword id="KW-0564">Palmitate</keyword>
<keyword id="KW-0597">Phosphoprotein</keyword>
<keyword id="KW-1185">Reference proteome</keyword>
<keyword id="KW-0832">Ubl conjugation</keyword>
<keyword id="KW-0862">Zinc</keyword>
<keyword id="KW-0863">Zinc-finger</keyword>
<dbReference type="EMBL" id="Y08355">
    <property type="protein sequence ID" value="CAA69642.1"/>
    <property type="molecule type" value="mRNA"/>
</dbReference>
<dbReference type="EMBL" id="AF439403">
    <property type="protein sequence ID" value="AAO15463.1"/>
    <property type="molecule type" value="mRNA"/>
</dbReference>
<dbReference type="EMBL" id="BC061575">
    <property type="protein sequence ID" value="AAH61575.1"/>
    <property type="molecule type" value="mRNA"/>
</dbReference>
<dbReference type="RefSeq" id="NP_001380813.1">
    <molecule id="O08623-2"/>
    <property type="nucleotide sequence ID" value="NM_001393884.1"/>
</dbReference>
<dbReference type="RefSeq" id="NP_787037.2">
    <molecule id="O08623-1"/>
    <property type="nucleotide sequence ID" value="NM_175843.4"/>
</dbReference>
<dbReference type="RefSeq" id="NP_853528.1">
    <property type="nucleotide sequence ID" value="NM_181550.1"/>
</dbReference>
<dbReference type="RefSeq" id="XP_006246275.1">
    <property type="nucleotide sequence ID" value="XM_006246213.2"/>
</dbReference>
<dbReference type="PDB" id="2K6Q">
    <property type="method" value="NMR"/>
    <property type="chains" value="B=331-346"/>
</dbReference>
<dbReference type="PDB" id="2KKC">
    <property type="method" value="NMR"/>
    <property type="chains" value="A=3-100"/>
</dbReference>
<dbReference type="PDB" id="2KTR">
    <property type="method" value="NMR"/>
    <property type="chains" value="A/B=3-100"/>
</dbReference>
<dbReference type="PDBsum" id="2K6Q"/>
<dbReference type="PDBsum" id="2KKC"/>
<dbReference type="PDBsum" id="2KTR"/>
<dbReference type="BMRB" id="O08623"/>
<dbReference type="SMR" id="O08623"/>
<dbReference type="BioGRID" id="250206">
    <property type="interactions" value="31"/>
</dbReference>
<dbReference type="CORUM" id="O08623"/>
<dbReference type="FunCoup" id="O08623">
    <property type="interactions" value="959"/>
</dbReference>
<dbReference type="IntAct" id="O08623">
    <property type="interactions" value="5"/>
</dbReference>
<dbReference type="MINT" id="O08623"/>
<dbReference type="STRING" id="10116.ENSRNOP00000056021"/>
<dbReference type="iPTMnet" id="O08623"/>
<dbReference type="PhosphoSitePlus" id="O08623"/>
<dbReference type="jPOST" id="O08623"/>
<dbReference type="PaxDb" id="10116-ENSRNOP00000056021"/>
<dbReference type="Ensembl" id="ENSRNOT00000004308.7">
    <molecule id="O08623-2"/>
    <property type="protein sequence ID" value="ENSRNOP00000004308.7"/>
    <property type="gene ID" value="ENSRNOG00000003147.9"/>
</dbReference>
<dbReference type="Ensembl" id="ENSRNOT00000059255.6">
    <molecule id="O08623-1"/>
    <property type="protein sequence ID" value="ENSRNOP00000056021.3"/>
    <property type="gene ID" value="ENSRNOG00000003147.9"/>
</dbReference>
<dbReference type="GeneID" id="113894"/>
<dbReference type="KEGG" id="rno:113894"/>
<dbReference type="UCSC" id="RGD:69287">
    <molecule id="O08623-1"/>
    <property type="organism name" value="rat"/>
</dbReference>
<dbReference type="AGR" id="RGD:69287"/>
<dbReference type="CTD" id="8878"/>
<dbReference type="RGD" id="69287">
    <property type="gene designation" value="Sqstm1"/>
</dbReference>
<dbReference type="eggNOG" id="KOG4582">
    <property type="taxonomic scope" value="Eukaryota"/>
</dbReference>
<dbReference type="GeneTree" id="ENSGT00390000002781"/>
<dbReference type="HOGENOM" id="CLU_038011_1_0_1"/>
<dbReference type="InParanoid" id="O08623"/>
<dbReference type="OMA" id="NCNGWLT"/>
<dbReference type="OrthoDB" id="441278at2759"/>
<dbReference type="PhylomeDB" id="O08623"/>
<dbReference type="Reactome" id="R-RNO-205043">
    <property type="pathway name" value="NRIF signals cell death from the nucleus"/>
</dbReference>
<dbReference type="Reactome" id="R-RNO-209543">
    <property type="pathway name" value="p75NTR recruits signalling complexes"/>
</dbReference>
<dbReference type="Reactome" id="R-RNO-209560">
    <property type="pathway name" value="NF-kB is activated and signals survival"/>
</dbReference>
<dbReference type="Reactome" id="R-RNO-5205685">
    <property type="pathway name" value="PINK1-PRKN Mediated Mitophagy"/>
</dbReference>
<dbReference type="Reactome" id="R-RNO-9020702">
    <property type="pathway name" value="Interleukin-1 signaling"/>
</dbReference>
<dbReference type="Reactome" id="R-RNO-9664873">
    <property type="pathway name" value="Pexophagy"/>
</dbReference>
<dbReference type="Reactome" id="R-RNO-9755511">
    <property type="pathway name" value="KEAP1-NFE2L2 pathway"/>
</dbReference>
<dbReference type="EvolutionaryTrace" id="O08623"/>
<dbReference type="PRO" id="PR:O08623"/>
<dbReference type="Proteomes" id="UP000002494">
    <property type="component" value="Chromosome 10"/>
</dbReference>
<dbReference type="Bgee" id="ENSRNOG00000003147">
    <property type="expression patterns" value="Expressed in skeletal muscle tissue and 19 other cell types or tissues"/>
</dbReference>
<dbReference type="ExpressionAtlas" id="O08623">
    <property type="expression patterns" value="baseline and differential"/>
</dbReference>
<dbReference type="GO" id="GO:0016235">
    <property type="term" value="C:aggresome"/>
    <property type="evidence" value="ECO:0000266"/>
    <property type="project" value="RGD"/>
</dbReference>
<dbReference type="GO" id="GO:0044753">
    <property type="term" value="C:amphisome"/>
    <property type="evidence" value="ECO:0000266"/>
    <property type="project" value="RGD"/>
</dbReference>
<dbReference type="GO" id="GO:0044754">
    <property type="term" value="C:autolysosome"/>
    <property type="evidence" value="ECO:0000266"/>
    <property type="project" value="RGD"/>
</dbReference>
<dbReference type="GO" id="GO:0005776">
    <property type="term" value="C:autophagosome"/>
    <property type="evidence" value="ECO:0000250"/>
    <property type="project" value="UniProtKB"/>
</dbReference>
<dbReference type="GO" id="GO:0005737">
    <property type="term" value="C:cytoplasm"/>
    <property type="evidence" value="ECO:0000266"/>
    <property type="project" value="RGD"/>
</dbReference>
<dbReference type="GO" id="GO:0005829">
    <property type="term" value="C:cytosol"/>
    <property type="evidence" value="ECO:0000266"/>
    <property type="project" value="RGD"/>
</dbReference>
<dbReference type="GO" id="GO:0005783">
    <property type="term" value="C:endoplasmic reticulum"/>
    <property type="evidence" value="ECO:0007669"/>
    <property type="project" value="UniProtKB-SubCell"/>
</dbReference>
<dbReference type="GO" id="GO:0098978">
    <property type="term" value="C:glutamatergic synapse"/>
    <property type="evidence" value="ECO:0000314"/>
    <property type="project" value="SynGO"/>
</dbReference>
<dbReference type="GO" id="GO:0016234">
    <property type="term" value="C:inclusion body"/>
    <property type="evidence" value="ECO:0000266"/>
    <property type="project" value="RGD"/>
</dbReference>
<dbReference type="GO" id="GO:0043232">
    <property type="term" value="C:intracellular membraneless organelle"/>
    <property type="evidence" value="ECO:0000250"/>
    <property type="project" value="UniProtKB"/>
</dbReference>
<dbReference type="GO" id="GO:0005770">
    <property type="term" value="C:late endosome"/>
    <property type="evidence" value="ECO:0007669"/>
    <property type="project" value="UniProtKB-SubCell"/>
</dbReference>
<dbReference type="GO" id="GO:0097413">
    <property type="term" value="C:Lewy body"/>
    <property type="evidence" value="ECO:0000314"/>
    <property type="project" value="RGD"/>
</dbReference>
<dbReference type="GO" id="GO:0005739">
    <property type="term" value="C:mitochondrion"/>
    <property type="evidence" value="ECO:0000266"/>
    <property type="project" value="RGD"/>
</dbReference>
<dbReference type="GO" id="GO:0000932">
    <property type="term" value="C:P-body"/>
    <property type="evidence" value="ECO:0000250"/>
    <property type="project" value="UniProtKB"/>
</dbReference>
<dbReference type="GO" id="GO:0000407">
    <property type="term" value="C:phagophore assembly site"/>
    <property type="evidence" value="ECO:0000266"/>
    <property type="project" value="RGD"/>
</dbReference>
<dbReference type="GO" id="GO:0016605">
    <property type="term" value="C:PML body"/>
    <property type="evidence" value="ECO:0000266"/>
    <property type="project" value="RGD"/>
</dbReference>
<dbReference type="GO" id="GO:0030017">
    <property type="term" value="C:sarcomere"/>
    <property type="evidence" value="ECO:0007669"/>
    <property type="project" value="UniProtKB-SubCell"/>
</dbReference>
<dbReference type="GO" id="GO:0097225">
    <property type="term" value="C:sperm midpiece"/>
    <property type="evidence" value="ECO:0000266"/>
    <property type="project" value="RGD"/>
</dbReference>
<dbReference type="GO" id="GO:0045202">
    <property type="term" value="C:synapse"/>
    <property type="evidence" value="ECO:0000314"/>
    <property type="project" value="SynGO"/>
</dbReference>
<dbReference type="GO" id="GO:0019899">
    <property type="term" value="F:enzyme binding"/>
    <property type="evidence" value="ECO:0000266"/>
    <property type="project" value="RGD"/>
</dbReference>
<dbReference type="GO" id="GO:0042802">
    <property type="term" value="F:identical protein binding"/>
    <property type="evidence" value="ECO:0000353"/>
    <property type="project" value="RGD"/>
</dbReference>
<dbReference type="GO" id="GO:0035255">
    <property type="term" value="F:ionotropic glutamate receptor binding"/>
    <property type="evidence" value="ECO:0000266"/>
    <property type="project" value="RGD"/>
</dbReference>
<dbReference type="GO" id="GO:0070530">
    <property type="term" value="F:K63-linked polyubiquitin modification-dependent protein binding"/>
    <property type="evidence" value="ECO:0000250"/>
    <property type="project" value="UniProtKB"/>
</dbReference>
<dbReference type="GO" id="GO:0140693">
    <property type="term" value="F:molecular condensate scaffold activity"/>
    <property type="evidence" value="ECO:0000266"/>
    <property type="project" value="RGD"/>
</dbReference>
<dbReference type="GO" id="GO:0140313">
    <property type="term" value="F:molecular sequestering activity"/>
    <property type="evidence" value="ECO:0000266"/>
    <property type="project" value="RGD"/>
</dbReference>
<dbReference type="GO" id="GO:0019901">
    <property type="term" value="F:protein kinase binding"/>
    <property type="evidence" value="ECO:0000266"/>
    <property type="project" value="RGD"/>
</dbReference>
<dbReference type="GO" id="GO:0005080">
    <property type="term" value="F:protein kinase C binding"/>
    <property type="evidence" value="ECO:0000353"/>
    <property type="project" value="RGD"/>
</dbReference>
<dbReference type="GO" id="GO:0140311">
    <property type="term" value="F:protein sequestering activity"/>
    <property type="evidence" value="ECO:0000250"/>
    <property type="project" value="UniProtKB"/>
</dbReference>
<dbReference type="GO" id="GO:0044877">
    <property type="term" value="F:protein-containing complex binding"/>
    <property type="evidence" value="ECO:0000353"/>
    <property type="project" value="RGD"/>
</dbReference>
<dbReference type="GO" id="GO:0030674">
    <property type="term" value="F:protein-macromolecule adaptor activity"/>
    <property type="evidence" value="ECO:0000250"/>
    <property type="project" value="UniProtKB"/>
</dbReference>
<dbReference type="GO" id="GO:0042169">
    <property type="term" value="F:SH2 domain binding"/>
    <property type="evidence" value="ECO:0000250"/>
    <property type="project" value="UniProtKB"/>
</dbReference>
<dbReference type="GO" id="GO:0035591">
    <property type="term" value="F:signaling adaptor activity"/>
    <property type="evidence" value="ECO:0000266"/>
    <property type="project" value="RGD"/>
</dbReference>
<dbReference type="GO" id="GO:0038023">
    <property type="term" value="F:signaling receptor activity"/>
    <property type="evidence" value="ECO:0000266"/>
    <property type="project" value="RGD"/>
</dbReference>
<dbReference type="GO" id="GO:0043130">
    <property type="term" value="F:ubiquitin binding"/>
    <property type="evidence" value="ECO:0000250"/>
    <property type="project" value="UniProtKB"/>
</dbReference>
<dbReference type="GO" id="GO:0031625">
    <property type="term" value="F:ubiquitin protein ligase binding"/>
    <property type="evidence" value="ECO:0000266"/>
    <property type="project" value="RGD"/>
</dbReference>
<dbReference type="GO" id="GO:0140036">
    <property type="term" value="F:ubiquitin-modified protein reader activity"/>
    <property type="evidence" value="ECO:0000250"/>
    <property type="project" value="UniProtKB"/>
</dbReference>
<dbReference type="GO" id="GO:0008270">
    <property type="term" value="F:zinc ion binding"/>
    <property type="evidence" value="ECO:0007669"/>
    <property type="project" value="UniProtKB-KW"/>
</dbReference>
<dbReference type="GO" id="GO:0035973">
    <property type="term" value="P:aggrephagy"/>
    <property type="evidence" value="ECO:0000250"/>
    <property type="project" value="UniProtKB"/>
</dbReference>
<dbReference type="GO" id="GO:0006915">
    <property type="term" value="P:apoptotic process"/>
    <property type="evidence" value="ECO:0007669"/>
    <property type="project" value="UniProtKB-KW"/>
</dbReference>
<dbReference type="GO" id="GO:0006914">
    <property type="term" value="P:autophagy"/>
    <property type="evidence" value="ECO:0000250"/>
    <property type="project" value="UniProtKB"/>
</dbReference>
<dbReference type="GO" id="GO:0070342">
    <property type="term" value="P:brown fat cell proliferation"/>
    <property type="evidence" value="ECO:0000266"/>
    <property type="project" value="RGD"/>
</dbReference>
<dbReference type="GO" id="GO:0030154">
    <property type="term" value="P:cell differentiation"/>
    <property type="evidence" value="ECO:0007669"/>
    <property type="project" value="UniProtKB-KW"/>
</dbReference>
<dbReference type="GO" id="GO:0033554">
    <property type="term" value="P:cellular response to stress"/>
    <property type="evidence" value="ECO:0000266"/>
    <property type="project" value="RGD"/>
</dbReference>
<dbReference type="GO" id="GO:0007032">
    <property type="term" value="P:endosome organization"/>
    <property type="evidence" value="ECO:0000250"/>
    <property type="project" value="UniProtKB"/>
</dbReference>
<dbReference type="GO" id="GO:0097009">
    <property type="term" value="P:energy homeostasis"/>
    <property type="evidence" value="ECO:0000266"/>
    <property type="project" value="RGD"/>
</dbReference>
<dbReference type="GO" id="GO:0002376">
    <property type="term" value="P:immune system process"/>
    <property type="evidence" value="ECO:0007669"/>
    <property type="project" value="UniProtKB-KW"/>
</dbReference>
<dbReference type="GO" id="GO:0016236">
    <property type="term" value="P:macroautophagy"/>
    <property type="evidence" value="ECO:0000250"/>
    <property type="project" value="UniProtKB"/>
</dbReference>
<dbReference type="GO" id="GO:0140694">
    <property type="term" value="P:membraneless organelle assembly"/>
    <property type="evidence" value="ECO:0000266"/>
    <property type="project" value="RGD"/>
</dbReference>
<dbReference type="GO" id="GO:0000423">
    <property type="term" value="P:mitophagy"/>
    <property type="evidence" value="ECO:0000266"/>
    <property type="project" value="RGD"/>
</dbReference>
<dbReference type="GO" id="GO:0110076">
    <property type="term" value="P:negative regulation of ferroptosis"/>
    <property type="evidence" value="ECO:0000250"/>
    <property type="project" value="UniProtKB"/>
</dbReference>
<dbReference type="GO" id="GO:0031397">
    <property type="term" value="P:negative regulation of protein ubiquitination"/>
    <property type="evidence" value="ECO:0000250"/>
    <property type="project" value="UniProtKB"/>
</dbReference>
<dbReference type="GO" id="GO:0034144">
    <property type="term" value="P:negative regulation of toll-like receptor 4 signaling pathway"/>
    <property type="evidence" value="ECO:0000266"/>
    <property type="project" value="RGD"/>
</dbReference>
<dbReference type="GO" id="GO:0000122">
    <property type="term" value="P:negative regulation of transcription by RNA polymerase II"/>
    <property type="evidence" value="ECO:0000266"/>
    <property type="project" value="RGD"/>
</dbReference>
<dbReference type="GO" id="GO:0000425">
    <property type="term" value="P:pexophagy"/>
    <property type="evidence" value="ECO:0000250"/>
    <property type="project" value="UniProtKB"/>
</dbReference>
<dbReference type="GO" id="GO:0010508">
    <property type="term" value="P:positive regulation of autophagy"/>
    <property type="evidence" value="ECO:0000266"/>
    <property type="project" value="RGD"/>
</dbReference>
<dbReference type="GO" id="GO:1900273">
    <property type="term" value="P:positive regulation of long-term synaptic potentiation"/>
    <property type="evidence" value="ECO:0000266"/>
    <property type="project" value="RGD"/>
</dbReference>
<dbReference type="GO" id="GO:1903078">
    <property type="term" value="P:positive regulation of protein localization to plasma membrane"/>
    <property type="evidence" value="ECO:0000266"/>
    <property type="project" value="RGD"/>
</dbReference>
<dbReference type="GO" id="GO:0030163">
    <property type="term" value="P:protein catabolic process"/>
    <property type="evidence" value="ECO:0000250"/>
    <property type="project" value="UniProtKB"/>
</dbReference>
<dbReference type="GO" id="GO:0006606">
    <property type="term" value="P:protein import into nucleus"/>
    <property type="evidence" value="ECO:0000266"/>
    <property type="project" value="RGD"/>
</dbReference>
<dbReference type="GO" id="GO:1905719">
    <property type="term" value="P:protein localization to perinuclear region of cytoplasm"/>
    <property type="evidence" value="ECO:0000250"/>
    <property type="project" value="UniProtKB"/>
</dbReference>
<dbReference type="GO" id="GO:0071211">
    <property type="term" value="P:protein targeting to vacuole involved in autophagy"/>
    <property type="evidence" value="ECO:0000250"/>
    <property type="project" value="UniProtKB"/>
</dbReference>
<dbReference type="GO" id="GO:0043122">
    <property type="term" value="P:regulation of canonical NF-kappaB signal transduction"/>
    <property type="evidence" value="ECO:0000250"/>
    <property type="project" value="UniProtKB"/>
</dbReference>
<dbReference type="GO" id="GO:0061635">
    <property type="term" value="P:regulation of protein complex stability"/>
    <property type="evidence" value="ECO:0000266"/>
    <property type="project" value="RGD"/>
</dbReference>
<dbReference type="GO" id="GO:0002931">
    <property type="term" value="P:response to ischemia"/>
    <property type="evidence" value="ECO:0000270"/>
    <property type="project" value="RGD"/>
</dbReference>
<dbReference type="GO" id="GO:0098780">
    <property type="term" value="P:response to mitochondrial depolarisation"/>
    <property type="evidence" value="ECO:0000266"/>
    <property type="project" value="RGD"/>
</dbReference>
<dbReference type="GO" id="GO:0001659">
    <property type="term" value="P:temperature homeostasis"/>
    <property type="evidence" value="ECO:0000266"/>
    <property type="project" value="RGD"/>
</dbReference>
<dbReference type="GO" id="GO:0006366">
    <property type="term" value="P:transcription by RNA polymerase II"/>
    <property type="evidence" value="ECO:0000266"/>
    <property type="project" value="RGD"/>
</dbReference>
<dbReference type="CDD" id="cd06402">
    <property type="entry name" value="PB1_p62"/>
    <property type="match status" value="1"/>
</dbReference>
<dbReference type="CDD" id="cd14320">
    <property type="entry name" value="UBA_SQSTM"/>
    <property type="match status" value="1"/>
</dbReference>
<dbReference type="CDD" id="cd02340">
    <property type="entry name" value="ZZ_NBR1_like"/>
    <property type="match status" value="1"/>
</dbReference>
<dbReference type="FunFam" id="1.10.8.10:FF:000034">
    <property type="entry name" value="Sequestosome 1"/>
    <property type="match status" value="1"/>
</dbReference>
<dbReference type="FunFam" id="3.10.20.90:FF:000169">
    <property type="entry name" value="Sequestosome 1"/>
    <property type="match status" value="1"/>
</dbReference>
<dbReference type="FunFam" id="3.30.60.90:FF:000012">
    <property type="entry name" value="Sequestosome 1"/>
    <property type="match status" value="1"/>
</dbReference>
<dbReference type="Gene3D" id="3.30.60.90">
    <property type="match status" value="1"/>
</dbReference>
<dbReference type="Gene3D" id="1.10.8.10">
    <property type="entry name" value="DNA helicase RuvA subunit, C-terminal domain"/>
    <property type="match status" value="1"/>
</dbReference>
<dbReference type="Gene3D" id="3.10.20.90">
    <property type="entry name" value="Phosphatidylinositol 3-kinase Catalytic Subunit, Chain A, domain 1"/>
    <property type="match status" value="1"/>
</dbReference>
<dbReference type="IDEAL" id="IID50133"/>
<dbReference type="InterPro" id="IPR052260">
    <property type="entry name" value="Autophagy_Rcpt_SigReg"/>
</dbReference>
<dbReference type="InterPro" id="IPR053793">
    <property type="entry name" value="PB1-like"/>
</dbReference>
<dbReference type="InterPro" id="IPR000270">
    <property type="entry name" value="PB1_dom"/>
</dbReference>
<dbReference type="InterPro" id="IPR034866">
    <property type="entry name" value="PB1_p62"/>
</dbReference>
<dbReference type="InterPro" id="IPR033741">
    <property type="entry name" value="SQSTM_UBA"/>
</dbReference>
<dbReference type="InterPro" id="IPR015940">
    <property type="entry name" value="UBA"/>
</dbReference>
<dbReference type="InterPro" id="IPR009060">
    <property type="entry name" value="UBA-like_sf"/>
</dbReference>
<dbReference type="InterPro" id="IPR000433">
    <property type="entry name" value="Znf_ZZ"/>
</dbReference>
<dbReference type="InterPro" id="IPR043145">
    <property type="entry name" value="Znf_ZZ_sf"/>
</dbReference>
<dbReference type="PANTHER" id="PTHR15090">
    <property type="entry name" value="SEQUESTOSOME 1-RELATED"/>
    <property type="match status" value="1"/>
</dbReference>
<dbReference type="PANTHER" id="PTHR15090:SF0">
    <property type="entry name" value="SEQUESTOSOME-1"/>
    <property type="match status" value="1"/>
</dbReference>
<dbReference type="Pfam" id="PF00564">
    <property type="entry name" value="PB1"/>
    <property type="match status" value="1"/>
</dbReference>
<dbReference type="Pfam" id="PF16577">
    <property type="entry name" value="UBA_5"/>
    <property type="match status" value="1"/>
</dbReference>
<dbReference type="Pfam" id="PF00569">
    <property type="entry name" value="ZZ"/>
    <property type="match status" value="1"/>
</dbReference>
<dbReference type="SMART" id="SM00666">
    <property type="entry name" value="PB1"/>
    <property type="match status" value="1"/>
</dbReference>
<dbReference type="SMART" id="SM00165">
    <property type="entry name" value="UBA"/>
    <property type="match status" value="1"/>
</dbReference>
<dbReference type="SMART" id="SM00291">
    <property type="entry name" value="ZnF_ZZ"/>
    <property type="match status" value="1"/>
</dbReference>
<dbReference type="SUPFAM" id="SSF54277">
    <property type="entry name" value="CAD &amp; PB1 domains"/>
    <property type="match status" value="1"/>
</dbReference>
<dbReference type="SUPFAM" id="SSF57850">
    <property type="entry name" value="RING/U-box"/>
    <property type="match status" value="1"/>
</dbReference>
<dbReference type="SUPFAM" id="SSF46934">
    <property type="entry name" value="UBA-like"/>
    <property type="match status" value="1"/>
</dbReference>
<dbReference type="PROSITE" id="PS51745">
    <property type="entry name" value="PB1"/>
    <property type="match status" value="1"/>
</dbReference>
<dbReference type="PROSITE" id="PS50030">
    <property type="entry name" value="UBA"/>
    <property type="match status" value="1"/>
</dbReference>
<dbReference type="PROSITE" id="PS01357">
    <property type="entry name" value="ZF_ZZ_1"/>
    <property type="match status" value="1"/>
</dbReference>
<dbReference type="PROSITE" id="PS50135">
    <property type="entry name" value="ZF_ZZ_2"/>
    <property type="match status" value="1"/>
</dbReference>
<protein>
    <recommendedName>
        <fullName>Sequestosome-1</fullName>
    </recommendedName>
    <alternativeName>
        <fullName>Protein kinase C-zeta-interacting protein</fullName>
        <shortName>PKC-zeta-interacting protein</shortName>
    </alternativeName>
    <alternativeName>
        <fullName>Ubiquitin-binding protein p62</fullName>
    </alternativeName>
</protein>
<name>SQSTM_RAT</name>
<proteinExistence type="evidence at protein level"/>
<evidence type="ECO:0000250" key="1"/>
<evidence type="ECO:0000250" key="2">
    <source>
        <dbReference type="UniProtKB" id="Q13501"/>
    </source>
</evidence>
<evidence type="ECO:0000250" key="3">
    <source>
        <dbReference type="UniProtKB" id="Q64337"/>
    </source>
</evidence>
<evidence type="ECO:0000255" key="4">
    <source>
        <dbReference type="PROSITE-ProRule" id="PRU00212"/>
    </source>
</evidence>
<evidence type="ECO:0000255" key="5">
    <source>
        <dbReference type="PROSITE-ProRule" id="PRU00228"/>
    </source>
</evidence>
<evidence type="ECO:0000255" key="6">
    <source>
        <dbReference type="PROSITE-ProRule" id="PRU01081"/>
    </source>
</evidence>
<evidence type="ECO:0000256" key="7">
    <source>
        <dbReference type="SAM" id="MobiDB-lite"/>
    </source>
</evidence>
<evidence type="ECO:0000269" key="8">
    <source>
    </source>
</evidence>
<evidence type="ECO:0000269" key="9">
    <source>
    </source>
</evidence>
<evidence type="ECO:0000269" key="10">
    <source>
    </source>
</evidence>
<evidence type="ECO:0000269" key="11">
    <source>
    </source>
</evidence>
<evidence type="ECO:0000269" key="12">
    <source>
    </source>
</evidence>
<evidence type="ECO:0000269" key="13">
    <source>
    </source>
</evidence>
<evidence type="ECO:0000269" key="14">
    <source>
    </source>
</evidence>
<evidence type="ECO:0000269" key="15">
    <source>
    </source>
</evidence>
<evidence type="ECO:0000269" key="16">
    <source>
    </source>
</evidence>
<evidence type="ECO:0000269" key="17">
    <source>
    </source>
</evidence>
<evidence type="ECO:0000269" key="18">
    <source>
    </source>
</evidence>
<evidence type="ECO:0000269" key="19">
    <source>
    </source>
</evidence>
<evidence type="ECO:0000269" key="20">
    <source>
    </source>
</evidence>
<evidence type="ECO:0000303" key="21">
    <source>
    </source>
</evidence>
<evidence type="ECO:0000305" key="22"/>
<evidence type="ECO:0000312" key="23">
    <source>
        <dbReference type="Proteomes" id="UP000002494"/>
    </source>
</evidence>
<evidence type="ECO:0007744" key="24">
    <source>
    </source>
</evidence>
<evidence type="ECO:0007829" key="25">
    <source>
        <dbReference type="PDB" id="2KKC"/>
    </source>
</evidence>
<gene>
    <name type="primary">Sqstm1</name>
    <name type="synonym">Zip</name>
</gene>